<comment type="function">
    <text evidence="4 7 14 15 16 18">Acts as the second step in ethanolamine degradation by converting acetaldehyde into acetyl-CoA (Probable) (PubMed:21803884). Has a very strong preference for NAD(+) over NADP(+) in both catalytic directions (PubMed:21803884). May play a role in bacterial microcompartment (BMC) assembly or maintenance (Probable). Directly targeted to the BMC (PubMed:27450681).</text>
</comment>
<comment type="function">
    <text evidence="8 9">Expression of the eut operon allows this bacteria to use ethanolamine (EA) as a carbon, nitrogen and energy source. It relies on cobalamin (vitamin B12) both as a cofactor for the ethanolamine ammonia-lyase (EAL) activity and to induce the operon (PubMed:3045078). EA enhances bacterial survival in macrophages in a concentration-dependent manner, suggesting it is an important nutrient during infection (PubMed:29531136).</text>
</comment>
<comment type="catalytic activity">
    <reaction evidence="4">
        <text>acetaldehyde + NAD(+) + CoA = acetyl-CoA + NADH + H(+)</text>
        <dbReference type="Rhea" id="RHEA:23288"/>
        <dbReference type="ChEBI" id="CHEBI:15343"/>
        <dbReference type="ChEBI" id="CHEBI:15378"/>
        <dbReference type="ChEBI" id="CHEBI:57287"/>
        <dbReference type="ChEBI" id="CHEBI:57288"/>
        <dbReference type="ChEBI" id="CHEBI:57540"/>
        <dbReference type="ChEBI" id="CHEBI:57945"/>
        <dbReference type="EC" id="1.2.1.10"/>
    </reaction>
    <physiologicalReaction direction="left-to-right" evidence="4">
        <dbReference type="Rhea" id="RHEA:23289"/>
    </physiologicalReaction>
    <physiologicalReaction direction="right-to-left" evidence="4">
        <dbReference type="Rhea" id="RHEA:23290"/>
    </physiologicalReaction>
</comment>
<comment type="biophysicochemical properties">
    <kinetics>
        <KM evidence="4">23.4 uM for acetyl-CoA</KM>
        <Vmax evidence="4">69.91 umol/min/mg enzyme</Vmax>
    </kinetics>
    <phDependence>
        <text evidence="4">Optimum pH is 6.5 for acetyl-CoA reductase and 7.5 for acetaldehyde dehydrogenase activities.</text>
    </phDependence>
</comment>
<comment type="pathway">
    <text evidence="9">Amine and polyamine degradation; ethanolamine degradation.</text>
</comment>
<comment type="subunit">
    <text evidence="7">Interacts with EutS, which targets it to the interior of the BMC.</text>
</comment>
<comment type="subcellular location">
    <subcellularLocation>
        <location evidence="7 15">Bacterial microcompartment</location>
    </subcellularLocation>
    <text evidence="17">Probably located inside the BMC.</text>
</comment>
<comment type="induction">
    <text evidence="9">Part of the 17-gene eut operon transcribed from a single promoter, induced by ethanolamine and adenosylcobalamin (AdoCbl, vitamin B12).</text>
</comment>
<comment type="domain">
    <text evidence="7">The first 21 residues target foreign proteins (tested with eGFP) to the BMC in E.coli. The cargo is only detected by Western blot in broken shells, strongly suggesting this protein is normally found inside the BMC and not on its exterior.</text>
</comment>
<comment type="disruption phenotype">
    <text evidence="1 2 3 5 6 10">Can use ethanolamine (EA) as a nitrogen source but not as a carbon source. Slightly attenuated in a mouse model of infection (PubMed:2656649, PubMed:7868611). No aerobic growth on EA supplemented with cobalamin (vitamin B12) (PubMed:10464203, PubMed:16272400). A non-polar deletion mutant does not grow on EA between pH 5.5 and pH 8.5, releases increased amounts of acetaldehyde on EA plus vitamin B12 (PubMed:16585748). A deletion allows growth on acetate, suggesting BMC assembly or maintenance is impaired (PubMed:23585538).</text>
</comment>
<comment type="biotechnology">
    <text evidence="4">Has been used to coproduce acetaldehyde and hydrogen in E.coli.</text>
</comment>
<comment type="biotechnology">
    <text evidence="7">Artificial BMCs can be made in E.coli by expressing eutK, eutL, eutM, eutN, eutS (eutSMNLK) or eutS alone. Cargo proteins can be targeted to them using the first 21 residues of this protein. This can lead to the development of tailored BMCs for specific metabolic reactions.</text>
</comment>
<comment type="similarity">
    <text evidence="13">Belongs to the EutE/PduP family.</text>
</comment>
<proteinExistence type="evidence at protein level"/>
<organism>
    <name type="scientific">Salmonella typhimurium (strain LT2 / SGSC1412 / ATCC 700720)</name>
    <dbReference type="NCBI Taxonomy" id="99287"/>
    <lineage>
        <taxon>Bacteria</taxon>
        <taxon>Pseudomonadati</taxon>
        <taxon>Pseudomonadota</taxon>
        <taxon>Gammaproteobacteria</taxon>
        <taxon>Enterobacterales</taxon>
        <taxon>Enterobacteriaceae</taxon>
        <taxon>Salmonella</taxon>
    </lineage>
</organism>
<feature type="chain" id="PRO_0000087085" description="Acetaldehyde dehydrogenase (acetylating) EutE">
    <location>
        <begin position="1"/>
        <end position="467"/>
    </location>
</feature>
<feature type="region of interest" description="Targets protein to the BMC" evidence="7">
    <location>
        <begin position="1"/>
        <end position="19"/>
    </location>
</feature>
<feature type="sequence conflict" description="In Ref. 1; AAA80209 and 2; AAC78118." evidence="13" ref="1 2">
    <original>A</original>
    <variation>R</variation>
    <location>
        <position position="219"/>
    </location>
</feature>
<dbReference type="EC" id="1.2.1.10" evidence="4"/>
<dbReference type="EMBL" id="U18560">
    <property type="protein sequence ID" value="AAA80209.1"/>
    <property type="molecule type" value="Genomic_DNA"/>
</dbReference>
<dbReference type="EMBL" id="AF093749">
    <property type="protein sequence ID" value="AAC78118.1"/>
    <property type="molecule type" value="Genomic_DNA"/>
</dbReference>
<dbReference type="EMBL" id="AE006468">
    <property type="protein sequence ID" value="AAL21357.1"/>
    <property type="molecule type" value="Genomic_DNA"/>
</dbReference>
<dbReference type="RefSeq" id="NP_461398.1">
    <property type="nucleotide sequence ID" value="NC_003197.2"/>
</dbReference>
<dbReference type="RefSeq" id="WP_001075640.1">
    <property type="nucleotide sequence ID" value="NC_003197.2"/>
</dbReference>
<dbReference type="SMR" id="P41793"/>
<dbReference type="STRING" id="99287.STM2463"/>
<dbReference type="PaxDb" id="99287-STM2463"/>
<dbReference type="GeneID" id="1253985"/>
<dbReference type="KEGG" id="stm:STM2463"/>
<dbReference type="PATRIC" id="fig|99287.12.peg.2601"/>
<dbReference type="HOGENOM" id="CLU_028794_1_0_6"/>
<dbReference type="OMA" id="IAIKSRN"/>
<dbReference type="PhylomeDB" id="P41793"/>
<dbReference type="BioCyc" id="MetaCyc:STM2463-MONOMER"/>
<dbReference type="BioCyc" id="SENT99287:STM2463-MONOMER"/>
<dbReference type="UniPathway" id="UPA00560"/>
<dbReference type="Proteomes" id="UP000001014">
    <property type="component" value="Chromosome"/>
</dbReference>
<dbReference type="GO" id="GO:0031469">
    <property type="term" value="C:bacterial microcompartment"/>
    <property type="evidence" value="ECO:0007669"/>
    <property type="project" value="UniProtKB-SubCell"/>
</dbReference>
<dbReference type="GO" id="GO:0008774">
    <property type="term" value="F:acetaldehyde dehydrogenase (acetylating) activity"/>
    <property type="evidence" value="ECO:0007669"/>
    <property type="project" value="UniProtKB-EC"/>
</dbReference>
<dbReference type="GO" id="GO:0046336">
    <property type="term" value="P:ethanolamine catabolic process"/>
    <property type="evidence" value="ECO:0007669"/>
    <property type="project" value="UniProtKB-UniPathway"/>
</dbReference>
<dbReference type="GO" id="GO:0006091">
    <property type="term" value="P:generation of precursor metabolites and energy"/>
    <property type="evidence" value="ECO:0000304"/>
    <property type="project" value="UniProtKB"/>
</dbReference>
<dbReference type="CDD" id="cd07121">
    <property type="entry name" value="ALDH_EutE"/>
    <property type="match status" value="1"/>
</dbReference>
<dbReference type="FunFam" id="3.40.309.10:FF:000020">
    <property type="entry name" value="Ethanolamine utilization aldehyde dehydrogenase"/>
    <property type="match status" value="1"/>
</dbReference>
<dbReference type="FunFam" id="3.40.605.10:FF:000018">
    <property type="entry name" value="Ethanolamine utilization aldehyde dehydrogenase"/>
    <property type="match status" value="1"/>
</dbReference>
<dbReference type="Gene3D" id="3.40.605.10">
    <property type="entry name" value="Aldehyde Dehydrogenase, Chain A, domain 1"/>
    <property type="match status" value="1"/>
</dbReference>
<dbReference type="Gene3D" id="3.40.309.10">
    <property type="entry name" value="Aldehyde Dehydrogenase, Chain A, domain 2"/>
    <property type="match status" value="1"/>
</dbReference>
<dbReference type="InterPro" id="IPR012408">
    <property type="entry name" value="Acetald_propionald_DH-rel"/>
</dbReference>
<dbReference type="InterPro" id="IPR016161">
    <property type="entry name" value="Ald_DH/histidinol_DH"/>
</dbReference>
<dbReference type="InterPro" id="IPR016163">
    <property type="entry name" value="Ald_DH_C"/>
</dbReference>
<dbReference type="InterPro" id="IPR016162">
    <property type="entry name" value="Ald_DH_N"/>
</dbReference>
<dbReference type="InterPro" id="IPR015590">
    <property type="entry name" value="Aldehyde_DH_dom"/>
</dbReference>
<dbReference type="NCBIfam" id="NF011927">
    <property type="entry name" value="PRK15398.1"/>
    <property type="match status" value="1"/>
</dbReference>
<dbReference type="PANTHER" id="PTHR11699">
    <property type="entry name" value="ALDEHYDE DEHYDROGENASE-RELATED"/>
    <property type="match status" value="1"/>
</dbReference>
<dbReference type="Pfam" id="PF00171">
    <property type="entry name" value="Aldedh"/>
    <property type="match status" value="1"/>
</dbReference>
<dbReference type="PIRSF" id="PIRSF036410">
    <property type="entry name" value="EutE_PduP"/>
    <property type="match status" value="1"/>
</dbReference>
<dbReference type="SUPFAM" id="SSF53720">
    <property type="entry name" value="ALDH-like"/>
    <property type="match status" value="1"/>
</dbReference>
<evidence type="ECO:0000269" key="1">
    <source>
    </source>
</evidence>
<evidence type="ECO:0000269" key="2">
    <source>
    </source>
</evidence>
<evidence type="ECO:0000269" key="3">
    <source>
    </source>
</evidence>
<evidence type="ECO:0000269" key="4">
    <source>
    </source>
</evidence>
<evidence type="ECO:0000269" key="5">
    <source>
    </source>
</evidence>
<evidence type="ECO:0000269" key="6">
    <source>
    </source>
</evidence>
<evidence type="ECO:0000269" key="7">
    <source>
    </source>
</evidence>
<evidence type="ECO:0000269" key="8">
    <source>
    </source>
</evidence>
<evidence type="ECO:0000269" key="9">
    <source>
    </source>
</evidence>
<evidence type="ECO:0000269" key="10">
    <source>
    </source>
</evidence>
<evidence type="ECO:0000303" key="11">
    <source>
    </source>
</evidence>
<evidence type="ECO:0000303" key="12">
    <source>
    </source>
</evidence>
<evidence type="ECO:0000305" key="13"/>
<evidence type="ECO:0000305" key="14">
    <source>
    </source>
</evidence>
<evidence type="ECO:0000305" key="15">
    <source>
    </source>
</evidence>
<evidence type="ECO:0000305" key="16">
    <source>
    </source>
</evidence>
<evidence type="ECO:0000305" key="17">
    <source>
    </source>
</evidence>
<evidence type="ECO:0000305" key="18">
    <source>
    </source>
</evidence>
<reference key="1">
    <citation type="journal article" date="1995" name="J. Bacteriol.">
        <title>Ethanolamine utilization in Salmonella typhimurium: nucleotide sequence, protein expression, and mutational analysis of the cchA cchB eutE eutJ eutG eutH gene cluster.</title>
        <authorList>
            <person name="Stojiljkovic I."/>
            <person name="Baeumler A.J."/>
            <person name="Heffron F."/>
        </authorList>
    </citation>
    <scope>NUCLEOTIDE SEQUENCE [GENOMIC DNA]</scope>
    <scope>FUNCTION</scope>
    <scope>DISRUPTION PHENOTYPE</scope>
    <source>
        <strain>ATCC 14028s / SGSG 2262</strain>
    </source>
</reference>
<reference key="2">
    <citation type="journal article" date="1999" name="J. Bacteriol.">
        <title>The 17-gene ethanolamine (eut) operon of Salmonella typhimurium encodes five homologues of carboxysome shell proteins.</title>
        <authorList>
            <person name="Kofoid E.C."/>
            <person name="Rappleye C.A."/>
            <person name="Stojiljkovic I."/>
            <person name="Roth J.R."/>
        </authorList>
    </citation>
    <scope>NUCLEOTIDE SEQUENCE [GENOMIC DNA]</scope>
    <scope>FUNCTION</scope>
    <scope>DISRUPTION PHENOTYPE</scope>
    <source>
        <strain>LT2</strain>
    </source>
</reference>
<reference key="3">
    <citation type="journal article" date="2001" name="Nature">
        <title>Complete genome sequence of Salmonella enterica serovar Typhimurium LT2.</title>
        <authorList>
            <person name="McClelland M."/>
            <person name="Sanderson K.E."/>
            <person name="Spieth J."/>
            <person name="Clifton S.W."/>
            <person name="Latreille P."/>
            <person name="Courtney L."/>
            <person name="Porwollik S."/>
            <person name="Ali J."/>
            <person name="Dante M."/>
            <person name="Du F."/>
            <person name="Hou S."/>
            <person name="Layman D."/>
            <person name="Leonard S."/>
            <person name="Nguyen C."/>
            <person name="Scott K."/>
            <person name="Holmes A."/>
            <person name="Grewal N."/>
            <person name="Mulvaney E."/>
            <person name="Ryan E."/>
            <person name="Sun H."/>
            <person name="Florea L."/>
            <person name="Miller W."/>
            <person name="Stoneking T."/>
            <person name="Nhan M."/>
            <person name="Waterston R."/>
            <person name="Wilson R.K."/>
        </authorList>
    </citation>
    <scope>NUCLEOTIDE SEQUENCE [LARGE SCALE GENOMIC DNA]</scope>
    <source>
        <strain>LT2 / SGSC1412 / ATCC 700720</strain>
    </source>
</reference>
<reference key="4">
    <citation type="journal article" date="1988" name="J. Bacteriol.">
        <title>Ethanolamine utilization in Salmonella typhimurium.</title>
        <authorList>
            <person name="Roof D.M."/>
            <person name="Roth J.R."/>
        </authorList>
    </citation>
    <scope>FUNCTION</scope>
    <scope>PATHWAY</scope>
    <scope>OPERON</scope>
    <scope>INDUCTION BY ETHANOLAMINE AND COBALAMIN</scope>
    <source>
        <strain>LT2</strain>
    </source>
</reference>
<reference key="5">
    <citation type="journal article" date="1989" name="J. Bacteriol.">
        <title>Functions required for vitamin B12-dependent ethanolamine utilization in Salmonella typhimurium.</title>
        <authorList>
            <person name="Roof D.M."/>
            <person name="Roth J.R."/>
        </authorList>
    </citation>
    <scope>FUNCTION</scope>
    <scope>DISRUPTION PHENOTYPE</scope>
    <source>
        <strain>LT2</strain>
    </source>
</reference>
<reference key="6">
    <citation type="journal article" date="2004" name="J. Bacteriol.">
        <title>A pH-sensitive function and phenotype: evidence that EutH facilitates diffusion of uncharged ethanolamine in Salmonella enterica.</title>
        <authorList>
            <person name="Penrod J.T."/>
            <person name="Mace C.C."/>
            <person name="Roth J.R."/>
        </authorList>
    </citation>
    <scope>DISRUPTION PHENOTYPE</scope>
    <source>
        <strain>LT2</strain>
    </source>
</reference>
<reference key="7">
    <citation type="journal article" date="2005" name="Microbiology">
        <title>Acetate excretion during growth of Salmonella enterica on ethanolamine requires phosphotransacetylase (EutD) activity, and acetate recapture requires acetyl-CoA synthetase (Acs) and phosphotransacetylase (Pta) activities.</title>
        <authorList>
            <person name="Starai V.J."/>
            <person name="Garrity J."/>
            <person name="Escalante-Semerena J.C."/>
        </authorList>
    </citation>
    <scope>DISRUPTION PHENOTYPE</scope>
    <source>
        <strain>LT2</strain>
    </source>
</reference>
<reference key="8">
    <citation type="journal article" date="2006" name="J. Bacteriol.">
        <title>Conserving a volatile metabolite: a role for carboxysome-like organelles in Salmonella enterica.</title>
        <authorList>
            <person name="Penrod J.T."/>
            <person name="Roth J.R."/>
        </authorList>
    </citation>
    <scope>DISRUPTION PHENOTYPE</scope>
    <source>
        <strain>LT2</strain>
    </source>
</reference>
<reference key="9">
    <citation type="journal article" date="2011" name="Appl. Environ. Microbiol.">
        <title>Coproduction of acetaldehyde and hydrogen during glucose fermentation by Escherichia coli.</title>
        <authorList>
            <person name="Zhu H."/>
            <person name="Gonzalez R."/>
            <person name="Bobik T.A."/>
        </authorList>
    </citation>
    <scope>FUNCTION</scope>
    <scope>CATALYTIC ACTIVITY</scope>
    <scope>BIOPHYSICOCHEMICAL PROPERTIES</scope>
    <scope>BIOTECHNOLOGY</scope>
    <source>
        <strain>LT2</strain>
    </source>
</reference>
<reference key="10">
    <citation type="journal article" date="2013" name="J. Bacteriol.">
        <title>Evidence that a metabolic microcompartment contains and recycles private cofactor pools.</title>
        <authorList>
            <person name="Huseby D.L."/>
            <person name="Roth J.R."/>
        </authorList>
    </citation>
    <scope>FUNCTION</scope>
    <scope>SUBCELLULAR LOCATION</scope>
    <source>
        <strain>LT2</strain>
    </source>
</reference>
<reference key="11">
    <citation type="journal article" date="2016" name="Appl. Microbiol. Biotechnol.">
        <title>Encapsulation of multiple cargo proteins within recombinant Eut nanocompartments.</title>
        <authorList>
            <person name="Quin M.B."/>
            <person name="Perdue S.A."/>
            <person name="Hsu S.Y."/>
            <person name="Schmidt-Dannert C."/>
        </authorList>
    </citation>
    <scope>FUNCTION</scope>
    <scope>INTERACTION WITH EUTS</scope>
    <scope>SUBUNIT</scope>
    <scope>SUBCELLULAR LOCATION</scope>
    <scope>DOMAIN</scope>
    <scope>BIOTECHNOLOGY</scope>
    <source>
        <strain>LT2</strain>
    </source>
</reference>
<reference key="12">
    <citation type="journal article" date="2018" name="Infect. Immun.">
        <title>The Ethanolamine Permease EutH Promotes Vacuole Adaptation of Salmonella enterica and Listeria monocytogenes during Macrophage Infection.</title>
        <authorList>
            <person name="Anderson C.J."/>
            <person name="Satkovich J."/>
            <person name="Koeseoglu V.K."/>
            <person name="Agaisse H."/>
            <person name="Kendall M.M."/>
        </authorList>
    </citation>
    <scope>FUNCTION</scope>
    <source>
        <strain>SL1344</strain>
    </source>
</reference>
<name>EUTE_SALTY</name>
<keyword id="KW-1283">Bacterial microcompartment</keyword>
<keyword id="KW-0520">NAD</keyword>
<keyword id="KW-0560">Oxidoreductase</keyword>
<keyword id="KW-1185">Reference proteome</keyword>
<keyword id="KW-0843">Virulence</keyword>
<accession>P41793</accession>
<protein>
    <recommendedName>
        <fullName evidence="11">Acetaldehyde dehydrogenase (acetylating) EutE</fullName>
        <ecNumber evidence="4">1.2.1.10</ecNumber>
    </recommendedName>
    <alternativeName>
        <fullName>Ethanolamine utilization protein EutE</fullName>
    </alternativeName>
</protein>
<gene>
    <name evidence="12" type="primary">eutE</name>
    <name type="ordered locus">STM2463</name>
</gene>
<sequence length="467" mass="49174">MNQQDIEQVVKAVLLKMKDSSQPASTVHEMGVFASLDDAVAAAKRAQQGLKSVAMRQLAIHAIREAGEKHARELAELAVSETGMGRVDDKFAKNVAQARGTPGVECLSPQVLTGDNGLTLIENAPWGVVASVTPSTNPAATVINNAISLIAAGNSVVFAPHPAAKKVSQRAITLLNQAVVAAGGPENLLVTVANPDIETAQRLFKYPGIGLLVVTGGEAVVDAARKHTNKRLIAAGAGNPPVVVDETADLPRAAQSIVKGASFDNNIICADEKVLIVVDSVADELMRLMEGQHAVKLTAAQAEQLQPVLLKNIDERGKGTVSRDWVGRDAGKIAAAIGLNVPDQTRLLFVETPANHPFAVTEMMMPVLPVVRVANVEEAIALAVQLEGGCHHTAAMHSRNIDNMNQMANAIDTSIFVKNGPCIAGLGLGGEGWTTMTITTPTGEGVTSARTFVRLRRCVLVDAFRIV</sequence>